<protein>
    <recommendedName>
        <fullName>Potassium channel toxin AaTXK-beta</fullName>
        <shortName>Toxin AaTXKbeta</shortName>
    </recommendedName>
    <alternativeName>
        <fullName evidence="5">Potassium channel toxin AaTXK-beta(1-64)</fullName>
    </alternativeName>
    <alternativeName>
        <fullName>Potassium channel toxin beta-KTx 2</fullName>
    </alternativeName>
    <component>
        <recommendedName>
            <fullName evidence="5">Potassium channel toxin AaTXK-beta(2-64)</fullName>
        </recommendedName>
    </component>
</protein>
<reference key="1">
    <citation type="journal article" date="1998" name="FEBS Lett.">
        <title>Evidence for a new class of scorpion toxins active against K+ channels.</title>
        <authorList>
            <person name="Legros C."/>
            <person name="Ceard B."/>
            <person name="Bougis P.E."/>
            <person name="Martin-Eauclaire M.-F."/>
        </authorList>
    </citation>
    <scope>NUCLEOTIDE SEQUENCE [MRNA]</scope>
    <source>
        <tissue>Venom gland</tissue>
    </source>
</reference>
<reference key="2">
    <citation type="journal article" date="2013" name="Mol. Pharmacol.">
        <title>Subtype-selective activation of Kv7 channels by AaTXKbeta(2-64), a novel toxin variant from the Androctonus australis scorpion venom.</title>
        <authorList>
            <person name="Landoulsi Z."/>
            <person name="Miceli F."/>
            <person name="Palmese A."/>
            <person name="Amoresano A."/>
            <person name="Marino G."/>
            <person name="El Ayeb M."/>
            <person name="Taglialatela M."/>
            <person name="Benkhalifa R."/>
        </authorList>
    </citation>
    <scope>PROTEIN SEQUENCE</scope>
    <scope>IDENTIFICATION BY MASS SPECTROMETRY</scope>
    <scope>FUNCTION</scope>
    <scope>SUBCELLULAR LOCATION</scope>
    <scope>SUBUNIT</scope>
    <source>
        <tissue>Venom</tissue>
    </source>
</reference>
<keyword id="KW-0903">Direct protein sequencing</keyword>
<keyword id="KW-1015">Disulfide bond</keyword>
<keyword id="KW-0872">Ion channel impairing toxin</keyword>
<keyword id="KW-0528">Neurotoxin</keyword>
<keyword id="KW-0632">Potassium channel impairing toxin</keyword>
<keyword id="KW-0964">Secreted</keyword>
<keyword id="KW-0732">Signal</keyword>
<keyword id="KW-0800">Toxin</keyword>
<keyword id="KW-1220">Voltage-gated potassium channel impairing toxin</keyword>
<comment type="function">
    <molecule>Potassium channel toxin AaTXK-beta</molecule>
    <text evidence="1 4">Inhibits voltage-gated potassium channels (Kv) (By similarity). Does not activate Kv7 channels (PubMed:24019223).</text>
</comment>
<comment type="function">
    <molecule>Potassium channel toxin AaTXK-beta(2-64)</molecule>
    <text evidence="4">Peptide activator of Kv7.4/KCNQ4 channels. Also acts as a subtype-selective activator of channels formed by Kv7.3/KCNQ3, Kv7.2/Kv7.3 (KCNQ2/KCNQ3), Kv7.5/Kv7.3 (KCNQ3/KCNQ5) subunits.</text>
</comment>
<comment type="subunit">
    <text evidence="4">Monomer (both chains).</text>
</comment>
<comment type="subcellular location">
    <subcellularLocation>
        <location evidence="4">Secreted</location>
    </subcellularLocation>
</comment>
<comment type="tissue specificity">
    <text evidence="7">Expressed by the venom gland.</text>
</comment>
<comment type="similarity">
    <text evidence="6">Belongs to the long chain scorpion toxin family. Class 1 subfamily.</text>
</comment>
<organism>
    <name type="scientific">Androctonus australis</name>
    <name type="common">Sahara scorpion</name>
    <dbReference type="NCBI Taxonomy" id="6858"/>
    <lineage>
        <taxon>Eukaryota</taxon>
        <taxon>Metazoa</taxon>
        <taxon>Ecdysozoa</taxon>
        <taxon>Arthropoda</taxon>
        <taxon>Chelicerata</taxon>
        <taxon>Arachnida</taxon>
        <taxon>Scorpiones</taxon>
        <taxon>Buthida</taxon>
        <taxon>Buthoidea</taxon>
        <taxon>Buthidae</taxon>
        <taxon>Androctonus</taxon>
    </lineage>
</organism>
<sequence length="91" mass="10148">MQRNLVVLLFLGMVALSSCGLREKHVQKLVKYAVPVGTLRTILQTVVHKVGKTQFGCPAYQGYCDDHCQDIKKEEGFCHGFKCKCGIPMGF</sequence>
<accession>P69939</accession>
<name>KBX1_ANDAU</name>
<dbReference type="SMR" id="P69939"/>
<dbReference type="GO" id="GO:0005576">
    <property type="term" value="C:extracellular region"/>
    <property type="evidence" value="ECO:0007669"/>
    <property type="project" value="UniProtKB-SubCell"/>
</dbReference>
<dbReference type="GO" id="GO:0015459">
    <property type="term" value="F:potassium channel regulator activity"/>
    <property type="evidence" value="ECO:0007669"/>
    <property type="project" value="UniProtKB-KW"/>
</dbReference>
<dbReference type="GO" id="GO:0090729">
    <property type="term" value="F:toxin activity"/>
    <property type="evidence" value="ECO:0007669"/>
    <property type="project" value="UniProtKB-KW"/>
</dbReference>
<dbReference type="InterPro" id="IPR029237">
    <property type="entry name" value="Long_scorpion_toxin_alpha/beta"/>
</dbReference>
<dbReference type="Pfam" id="PF14866">
    <property type="entry name" value="Scorpion_toxin_alpha-beta"/>
    <property type="match status" value="1"/>
</dbReference>
<dbReference type="PROSITE" id="PS51862">
    <property type="entry name" value="BSPN_CSAB"/>
    <property type="match status" value="1"/>
</dbReference>
<evidence type="ECO:0000250" key="1">
    <source>
        <dbReference type="UniProtKB" id="P69940"/>
    </source>
</evidence>
<evidence type="ECO:0000255" key="2"/>
<evidence type="ECO:0000255" key="3">
    <source>
        <dbReference type="PROSITE-ProRule" id="PRU01209"/>
    </source>
</evidence>
<evidence type="ECO:0000269" key="4">
    <source>
    </source>
</evidence>
<evidence type="ECO:0000303" key="5">
    <source>
    </source>
</evidence>
<evidence type="ECO:0000305" key="6"/>
<evidence type="ECO:0000305" key="7">
    <source>
    </source>
</evidence>
<proteinExistence type="evidence at protein level"/>
<feature type="signal peptide" evidence="2">
    <location>
        <begin position="1"/>
        <end position="19"/>
    </location>
</feature>
<feature type="propeptide" id="PRO_0000035340" evidence="7">
    <location>
        <begin position="20"/>
        <end position="27"/>
    </location>
</feature>
<feature type="chain" id="PRO_0000035341" description="Potassium channel toxin AaTXK-beta" evidence="4">
    <location>
        <begin position="28"/>
        <end position="91"/>
    </location>
</feature>
<feature type="chain" id="PRO_0000424386" description="Potassium channel toxin AaTXK-beta(2-64)" evidence="4">
    <location>
        <begin position="29"/>
        <end position="91"/>
    </location>
</feature>
<feature type="domain" description="BetaSPN-type CS-alpha/beta" evidence="3">
    <location>
        <begin position="54"/>
        <end position="91"/>
    </location>
</feature>
<feature type="disulfide bond" evidence="3">
    <location>
        <begin position="57"/>
        <end position="78"/>
    </location>
</feature>
<feature type="disulfide bond" evidence="3">
    <location>
        <begin position="64"/>
        <end position="83"/>
    </location>
</feature>
<feature type="disulfide bond" evidence="3">
    <location>
        <begin position="68"/>
        <end position="85"/>
    </location>
</feature>